<accession>Q1GAP2</accession>
<sequence>MANQDQAYLDLLKKIMTEGNDKNDRTGTGTRSLFGAQMRFDLSQGFPILTTKRVPFGLIKSELLWFLRGDTNIRFLLEHKNHIWDEWAFKNWVTSPEYQGPDMTDFGLRSQKDPGFKAVYDEEMQKFCQRILDDEAFAQKYGNLGDVYGAQWRHWGKRDGGFIDQIADVIEQIKTNPDSRRLIVTAWNPEDVPSSALPPCHVLFQFYVADGKLSLQLYQRSGDMFLGVPFNIASYSLLLSLIARETGLEVGEFVHTIGDAHIYKNHFAQVEEQLKRKPFDAPTLWLNPGKKKVADFEMADIKLVNYQHGSTIKAPVAV</sequence>
<keyword id="KW-0963">Cytoplasm</keyword>
<keyword id="KW-0489">Methyltransferase</keyword>
<keyword id="KW-0545">Nucleotide biosynthesis</keyword>
<keyword id="KW-1185">Reference proteome</keyword>
<keyword id="KW-0808">Transferase</keyword>
<name>TYSY_LACDA</name>
<dbReference type="EC" id="2.1.1.45" evidence="1"/>
<dbReference type="EMBL" id="CR954253">
    <property type="protein sequence ID" value="CAI97614.1"/>
    <property type="molecule type" value="Genomic_DNA"/>
</dbReference>
<dbReference type="RefSeq" id="WP_003619256.1">
    <property type="nucleotide sequence ID" value="NZ_JQAV01000001.1"/>
</dbReference>
<dbReference type="SMR" id="Q1GAP2"/>
<dbReference type="STRING" id="390333.Ldb0787"/>
<dbReference type="KEGG" id="ldb:Ldb0787"/>
<dbReference type="PATRIC" id="fig|390333.13.peg.12"/>
<dbReference type="eggNOG" id="COG0207">
    <property type="taxonomic scope" value="Bacteria"/>
</dbReference>
<dbReference type="HOGENOM" id="CLU_021669_0_0_9"/>
<dbReference type="BioCyc" id="LDEL390333:LDB_RS03470-MONOMER"/>
<dbReference type="UniPathway" id="UPA00575"/>
<dbReference type="Proteomes" id="UP000001259">
    <property type="component" value="Chromosome"/>
</dbReference>
<dbReference type="GO" id="GO:0005829">
    <property type="term" value="C:cytosol"/>
    <property type="evidence" value="ECO:0007669"/>
    <property type="project" value="TreeGrafter"/>
</dbReference>
<dbReference type="GO" id="GO:0004799">
    <property type="term" value="F:thymidylate synthase activity"/>
    <property type="evidence" value="ECO:0007669"/>
    <property type="project" value="UniProtKB-UniRule"/>
</dbReference>
<dbReference type="GO" id="GO:0006231">
    <property type="term" value="P:dTMP biosynthetic process"/>
    <property type="evidence" value="ECO:0007669"/>
    <property type="project" value="UniProtKB-UniRule"/>
</dbReference>
<dbReference type="GO" id="GO:0006235">
    <property type="term" value="P:dTTP biosynthetic process"/>
    <property type="evidence" value="ECO:0007669"/>
    <property type="project" value="UniProtKB-UniRule"/>
</dbReference>
<dbReference type="GO" id="GO:0032259">
    <property type="term" value="P:methylation"/>
    <property type="evidence" value="ECO:0007669"/>
    <property type="project" value="UniProtKB-KW"/>
</dbReference>
<dbReference type="CDD" id="cd00351">
    <property type="entry name" value="TS_Pyrimidine_HMase"/>
    <property type="match status" value="1"/>
</dbReference>
<dbReference type="Gene3D" id="3.30.572.10">
    <property type="entry name" value="Thymidylate synthase/dCMP hydroxymethylase domain"/>
    <property type="match status" value="1"/>
</dbReference>
<dbReference type="HAMAP" id="MF_00008">
    <property type="entry name" value="Thymidy_synth_bact"/>
    <property type="match status" value="1"/>
</dbReference>
<dbReference type="InterPro" id="IPR045097">
    <property type="entry name" value="Thymidate_synth/dCMP_Mease"/>
</dbReference>
<dbReference type="InterPro" id="IPR023451">
    <property type="entry name" value="Thymidate_synth/dCMP_Mease_dom"/>
</dbReference>
<dbReference type="InterPro" id="IPR036926">
    <property type="entry name" value="Thymidate_synth/dCMP_Mease_sf"/>
</dbReference>
<dbReference type="InterPro" id="IPR000398">
    <property type="entry name" value="Thymidylate_synthase"/>
</dbReference>
<dbReference type="InterPro" id="IPR020940">
    <property type="entry name" value="Thymidylate_synthase_AS"/>
</dbReference>
<dbReference type="NCBIfam" id="NF002496">
    <property type="entry name" value="PRK01827.1-2"/>
    <property type="match status" value="1"/>
</dbReference>
<dbReference type="NCBIfam" id="TIGR03284">
    <property type="entry name" value="thym_sym"/>
    <property type="match status" value="1"/>
</dbReference>
<dbReference type="PANTHER" id="PTHR11548:SF9">
    <property type="entry name" value="THYMIDYLATE SYNTHASE"/>
    <property type="match status" value="1"/>
</dbReference>
<dbReference type="PANTHER" id="PTHR11548">
    <property type="entry name" value="THYMIDYLATE SYNTHASE 1"/>
    <property type="match status" value="1"/>
</dbReference>
<dbReference type="Pfam" id="PF00303">
    <property type="entry name" value="Thymidylat_synt"/>
    <property type="match status" value="1"/>
</dbReference>
<dbReference type="PRINTS" id="PR00108">
    <property type="entry name" value="THYMDSNTHASE"/>
</dbReference>
<dbReference type="SUPFAM" id="SSF55831">
    <property type="entry name" value="Thymidylate synthase/dCMP hydroxymethylase"/>
    <property type="match status" value="1"/>
</dbReference>
<dbReference type="PROSITE" id="PS00091">
    <property type="entry name" value="THYMIDYLATE_SYNTHASE"/>
    <property type="match status" value="1"/>
</dbReference>
<organism>
    <name type="scientific">Lactobacillus delbrueckii subsp. bulgaricus (strain ATCC 11842 / DSM 20081 / BCRC 10696 / JCM 1002 / NBRC 13953 / NCIMB 11778 / NCTC 12712 / WDCM 00102 / Lb 14)</name>
    <dbReference type="NCBI Taxonomy" id="390333"/>
    <lineage>
        <taxon>Bacteria</taxon>
        <taxon>Bacillati</taxon>
        <taxon>Bacillota</taxon>
        <taxon>Bacilli</taxon>
        <taxon>Lactobacillales</taxon>
        <taxon>Lactobacillaceae</taxon>
        <taxon>Lactobacillus</taxon>
    </lineage>
</organism>
<evidence type="ECO:0000255" key="1">
    <source>
        <dbReference type="HAMAP-Rule" id="MF_00008"/>
    </source>
</evidence>
<feature type="chain" id="PRO_1000000614" description="Thymidylate synthase">
    <location>
        <begin position="1"/>
        <end position="318"/>
    </location>
</feature>
<feature type="active site" description="Nucleophile" evidence="1">
    <location>
        <position position="200"/>
    </location>
</feature>
<feature type="binding site" description="in other chain" evidence="1">
    <location>
        <position position="25"/>
    </location>
    <ligand>
        <name>dUMP</name>
        <dbReference type="ChEBI" id="CHEBI:246422"/>
        <note>ligand shared between dimeric partners</note>
    </ligand>
</feature>
<feature type="binding site" evidence="1">
    <location>
        <begin position="180"/>
        <end position="181"/>
    </location>
    <ligand>
        <name>dUMP</name>
        <dbReference type="ChEBI" id="CHEBI:246422"/>
        <note>ligand shared between dimeric partners</note>
    </ligand>
</feature>
<feature type="binding site" description="in other chain" evidence="1">
    <location>
        <begin position="220"/>
        <end position="223"/>
    </location>
    <ligand>
        <name>dUMP</name>
        <dbReference type="ChEBI" id="CHEBI:246422"/>
        <note>ligand shared between dimeric partners</note>
    </ligand>
</feature>
<feature type="binding site" evidence="1">
    <location>
        <position position="223"/>
    </location>
    <ligand>
        <name>(6R)-5,10-methylene-5,6,7,8-tetrahydrofolate</name>
        <dbReference type="ChEBI" id="CHEBI:15636"/>
    </ligand>
</feature>
<feature type="binding site" description="in other chain" evidence="1">
    <location>
        <position position="231"/>
    </location>
    <ligand>
        <name>dUMP</name>
        <dbReference type="ChEBI" id="CHEBI:246422"/>
        <note>ligand shared between dimeric partners</note>
    </ligand>
</feature>
<feature type="binding site" description="in other chain" evidence="1">
    <location>
        <begin position="261"/>
        <end position="263"/>
    </location>
    <ligand>
        <name>dUMP</name>
        <dbReference type="ChEBI" id="CHEBI:246422"/>
        <note>ligand shared between dimeric partners</note>
    </ligand>
</feature>
<feature type="binding site" evidence="1">
    <location>
        <position position="317"/>
    </location>
    <ligand>
        <name>(6R)-5,10-methylene-5,6,7,8-tetrahydrofolate</name>
        <dbReference type="ChEBI" id="CHEBI:15636"/>
    </ligand>
</feature>
<comment type="function">
    <text evidence="1">Catalyzes the reductive methylation of 2'-deoxyuridine-5'-monophosphate (dUMP) to 2'-deoxythymidine-5'-monophosphate (dTMP) while utilizing 5,10-methylenetetrahydrofolate (mTHF) as the methyl donor and reductant in the reaction, yielding dihydrofolate (DHF) as a by-product. This enzymatic reaction provides an intracellular de novo source of dTMP, an essential precursor for DNA biosynthesis.</text>
</comment>
<comment type="catalytic activity">
    <reaction evidence="1">
        <text>dUMP + (6R)-5,10-methylene-5,6,7,8-tetrahydrofolate = 7,8-dihydrofolate + dTMP</text>
        <dbReference type="Rhea" id="RHEA:12104"/>
        <dbReference type="ChEBI" id="CHEBI:15636"/>
        <dbReference type="ChEBI" id="CHEBI:57451"/>
        <dbReference type="ChEBI" id="CHEBI:63528"/>
        <dbReference type="ChEBI" id="CHEBI:246422"/>
        <dbReference type="EC" id="2.1.1.45"/>
    </reaction>
</comment>
<comment type="pathway">
    <text evidence="1">Pyrimidine metabolism; dTTP biosynthesis.</text>
</comment>
<comment type="subunit">
    <text evidence="1">Homodimer.</text>
</comment>
<comment type="subcellular location">
    <subcellularLocation>
        <location evidence="1">Cytoplasm</location>
    </subcellularLocation>
</comment>
<comment type="similarity">
    <text evidence="1">Belongs to the thymidylate synthase family. Bacterial-type ThyA subfamily.</text>
</comment>
<gene>
    <name evidence="1" type="primary">thyA</name>
    <name type="ordered locus">Ldb0787</name>
</gene>
<reference key="1">
    <citation type="journal article" date="2006" name="Proc. Natl. Acad. Sci. U.S.A.">
        <title>The complete genome sequence of Lactobacillus bulgaricus reveals extensive and ongoing reductive evolution.</title>
        <authorList>
            <person name="van de Guchte M."/>
            <person name="Penaud S."/>
            <person name="Grimaldi C."/>
            <person name="Barbe V."/>
            <person name="Bryson K."/>
            <person name="Nicolas P."/>
            <person name="Robert C."/>
            <person name="Oztas S."/>
            <person name="Mangenot S."/>
            <person name="Couloux A."/>
            <person name="Loux V."/>
            <person name="Dervyn R."/>
            <person name="Bossy R."/>
            <person name="Bolotin A."/>
            <person name="Batto J.-M."/>
            <person name="Walunas T."/>
            <person name="Gibrat J.-F."/>
            <person name="Bessieres P."/>
            <person name="Weissenbach J."/>
            <person name="Ehrlich S.D."/>
            <person name="Maguin E."/>
        </authorList>
    </citation>
    <scope>NUCLEOTIDE SEQUENCE [LARGE SCALE GENOMIC DNA]</scope>
    <source>
        <strain>ATCC 11842 / DSM 20081 / BCRC 10696 / JCM 1002 / NBRC 13953 / NCIMB 11778 / NCTC 12712 / WDCM 00102 / Lb 14</strain>
    </source>
</reference>
<proteinExistence type="inferred from homology"/>
<protein>
    <recommendedName>
        <fullName evidence="1">Thymidylate synthase</fullName>
        <shortName evidence="1">TS</shortName>
        <shortName evidence="1">TSase</shortName>
        <ecNumber evidence="1">2.1.1.45</ecNumber>
    </recommendedName>
</protein>